<accession>Q3B4V9</accession>
<sequence length="372" mass="40793">MSFNALPQSSMPLLMGNSLNAWSDALTGFAPMGLPLGLLVIAAIPLVFIALYALTYGVYGERKISAFMQDRLGPMEVGKWGILQTLADILKLLQKEDIVPTSADKFLFVIGPGVLFVGSFLAFAVLPFGPAFIGANLNVGLFYAIGIVALEVVGILAAGWGSNNKWALYGAVRSVAQIVSYEIPAAIALLCGAMMAGTLDMQEINVLQSGPWGFAHFFLFQSPIAWLPFLIYFIASLAETNRAPFDIPEAESELVAGYFTEYSGMKFAVIFLAEYGSMFMVSAIIAIVFLGGWNSPLPNIGSLALNDLTTGPVWGAFWIIMKGFFFIFVQMWLRWTLPRLRVDQLMYLCWKVLTPFAFVSFVLTAIWMIYVP</sequence>
<proteinExistence type="inferred from homology"/>
<protein>
    <recommendedName>
        <fullName evidence="1">NADH-quinone oxidoreductase subunit H</fullName>
        <ecNumber evidence="1">7.1.1.-</ecNumber>
    </recommendedName>
    <alternativeName>
        <fullName evidence="1">NADH dehydrogenase I subunit H</fullName>
    </alternativeName>
    <alternativeName>
        <fullName evidence="1">NDH-1 subunit H</fullName>
    </alternativeName>
</protein>
<name>NUOH_CHLL3</name>
<comment type="function">
    <text evidence="1">NDH-1 shuttles electrons from NADH, via FMN and iron-sulfur (Fe-S) centers, to quinones in the respiratory chain. The immediate electron acceptor for the enzyme in this species is believed to be ubiquinone. Couples the redox reaction to proton translocation (for every two electrons transferred, four hydrogen ions are translocated across the cytoplasmic membrane), and thus conserves the redox energy in a proton gradient. This subunit may bind ubiquinone.</text>
</comment>
<comment type="catalytic activity">
    <reaction evidence="1">
        <text>a quinone + NADH + 5 H(+)(in) = a quinol + NAD(+) + 4 H(+)(out)</text>
        <dbReference type="Rhea" id="RHEA:57888"/>
        <dbReference type="ChEBI" id="CHEBI:15378"/>
        <dbReference type="ChEBI" id="CHEBI:24646"/>
        <dbReference type="ChEBI" id="CHEBI:57540"/>
        <dbReference type="ChEBI" id="CHEBI:57945"/>
        <dbReference type="ChEBI" id="CHEBI:132124"/>
    </reaction>
</comment>
<comment type="subunit">
    <text evidence="1">NDH-1 is composed of 14 different subunits. Subunits NuoA, H, J, K, L, M, N constitute the membrane sector of the complex.</text>
</comment>
<comment type="subcellular location">
    <subcellularLocation>
        <location evidence="1">Cell inner membrane</location>
        <topology evidence="1">Multi-pass membrane protein</topology>
    </subcellularLocation>
</comment>
<comment type="similarity">
    <text evidence="1">Belongs to the complex I subunit 1 family.</text>
</comment>
<keyword id="KW-0997">Cell inner membrane</keyword>
<keyword id="KW-1003">Cell membrane</keyword>
<keyword id="KW-0472">Membrane</keyword>
<keyword id="KW-0520">NAD</keyword>
<keyword id="KW-0874">Quinone</keyword>
<keyword id="KW-1185">Reference proteome</keyword>
<keyword id="KW-1278">Translocase</keyword>
<keyword id="KW-0812">Transmembrane</keyword>
<keyword id="KW-1133">Transmembrane helix</keyword>
<keyword id="KW-0830">Ubiquinone</keyword>
<evidence type="ECO:0000255" key="1">
    <source>
        <dbReference type="HAMAP-Rule" id="MF_01350"/>
    </source>
</evidence>
<reference key="1">
    <citation type="submission" date="2005-08" db="EMBL/GenBank/DDBJ databases">
        <title>Complete sequence of Pelodictyon luteolum DSM 273.</title>
        <authorList>
            <consortium name="US DOE Joint Genome Institute"/>
            <person name="Copeland A."/>
            <person name="Lucas S."/>
            <person name="Lapidus A."/>
            <person name="Barry K."/>
            <person name="Detter J.C."/>
            <person name="Glavina T."/>
            <person name="Hammon N."/>
            <person name="Israni S."/>
            <person name="Pitluck S."/>
            <person name="Bryant D."/>
            <person name="Schmutz J."/>
            <person name="Larimer F."/>
            <person name="Land M."/>
            <person name="Kyrpides N."/>
            <person name="Ivanova N."/>
            <person name="Richardson P."/>
        </authorList>
    </citation>
    <scope>NUCLEOTIDE SEQUENCE [LARGE SCALE GENOMIC DNA]</scope>
    <source>
        <strain>DSM 273 / BCRC 81028 / 2530</strain>
    </source>
</reference>
<gene>
    <name evidence="1" type="primary">nuoH</name>
    <name type="ordered locus">Plut_0747</name>
</gene>
<organism>
    <name type="scientific">Chlorobium luteolum (strain DSM 273 / BCRC 81028 / 2530)</name>
    <name type="common">Pelodictyon luteolum</name>
    <dbReference type="NCBI Taxonomy" id="319225"/>
    <lineage>
        <taxon>Bacteria</taxon>
        <taxon>Pseudomonadati</taxon>
        <taxon>Chlorobiota</taxon>
        <taxon>Chlorobiia</taxon>
        <taxon>Chlorobiales</taxon>
        <taxon>Chlorobiaceae</taxon>
        <taxon>Chlorobium/Pelodictyon group</taxon>
        <taxon>Pelodictyon</taxon>
    </lineage>
</organism>
<dbReference type="EC" id="7.1.1.-" evidence="1"/>
<dbReference type="EMBL" id="CP000096">
    <property type="protein sequence ID" value="ABB23622.1"/>
    <property type="molecule type" value="Genomic_DNA"/>
</dbReference>
<dbReference type="RefSeq" id="WP_011357496.1">
    <property type="nucleotide sequence ID" value="NC_007512.1"/>
</dbReference>
<dbReference type="SMR" id="Q3B4V9"/>
<dbReference type="STRING" id="319225.Plut_0747"/>
<dbReference type="KEGG" id="plt:Plut_0747"/>
<dbReference type="eggNOG" id="COG1005">
    <property type="taxonomic scope" value="Bacteria"/>
</dbReference>
<dbReference type="HOGENOM" id="CLU_015134_0_1_10"/>
<dbReference type="OrthoDB" id="9803734at2"/>
<dbReference type="Proteomes" id="UP000002709">
    <property type="component" value="Chromosome"/>
</dbReference>
<dbReference type="GO" id="GO:0005886">
    <property type="term" value="C:plasma membrane"/>
    <property type="evidence" value="ECO:0007669"/>
    <property type="project" value="UniProtKB-SubCell"/>
</dbReference>
<dbReference type="GO" id="GO:0003954">
    <property type="term" value="F:NADH dehydrogenase activity"/>
    <property type="evidence" value="ECO:0007669"/>
    <property type="project" value="TreeGrafter"/>
</dbReference>
<dbReference type="GO" id="GO:0016655">
    <property type="term" value="F:oxidoreductase activity, acting on NAD(P)H, quinone or similar compound as acceptor"/>
    <property type="evidence" value="ECO:0007669"/>
    <property type="project" value="UniProtKB-UniRule"/>
</dbReference>
<dbReference type="GO" id="GO:0048038">
    <property type="term" value="F:quinone binding"/>
    <property type="evidence" value="ECO:0007669"/>
    <property type="project" value="UniProtKB-KW"/>
</dbReference>
<dbReference type="GO" id="GO:0009060">
    <property type="term" value="P:aerobic respiration"/>
    <property type="evidence" value="ECO:0007669"/>
    <property type="project" value="TreeGrafter"/>
</dbReference>
<dbReference type="HAMAP" id="MF_01350">
    <property type="entry name" value="NDH1_NuoH"/>
    <property type="match status" value="1"/>
</dbReference>
<dbReference type="InterPro" id="IPR001694">
    <property type="entry name" value="NADH_UbQ_OxRdtase_su1/FPO"/>
</dbReference>
<dbReference type="InterPro" id="IPR018086">
    <property type="entry name" value="NADH_UbQ_OxRdtase_su1_CS"/>
</dbReference>
<dbReference type="NCBIfam" id="NF004741">
    <property type="entry name" value="PRK06076.1-2"/>
    <property type="match status" value="1"/>
</dbReference>
<dbReference type="PANTHER" id="PTHR11432">
    <property type="entry name" value="NADH DEHYDROGENASE SUBUNIT 1"/>
    <property type="match status" value="1"/>
</dbReference>
<dbReference type="PANTHER" id="PTHR11432:SF3">
    <property type="entry name" value="NADH-UBIQUINONE OXIDOREDUCTASE CHAIN 1"/>
    <property type="match status" value="1"/>
</dbReference>
<dbReference type="Pfam" id="PF00146">
    <property type="entry name" value="NADHdh"/>
    <property type="match status" value="1"/>
</dbReference>
<dbReference type="PROSITE" id="PS00667">
    <property type="entry name" value="COMPLEX1_ND1_1"/>
    <property type="match status" value="1"/>
</dbReference>
<dbReference type="PROSITE" id="PS00668">
    <property type="entry name" value="COMPLEX1_ND1_2"/>
    <property type="match status" value="1"/>
</dbReference>
<feature type="chain" id="PRO_0000240097" description="NADH-quinone oxidoreductase subunit H">
    <location>
        <begin position="1"/>
        <end position="372"/>
    </location>
</feature>
<feature type="transmembrane region" description="Helical" evidence="1">
    <location>
        <begin position="34"/>
        <end position="54"/>
    </location>
</feature>
<feature type="transmembrane region" description="Helical" evidence="1">
    <location>
        <begin position="106"/>
        <end position="126"/>
    </location>
</feature>
<feature type="transmembrane region" description="Helical" evidence="1">
    <location>
        <begin position="139"/>
        <end position="159"/>
    </location>
</feature>
<feature type="transmembrane region" description="Helical" evidence="1">
    <location>
        <begin position="178"/>
        <end position="198"/>
    </location>
</feature>
<feature type="transmembrane region" description="Helical" evidence="1">
    <location>
        <begin position="217"/>
        <end position="237"/>
    </location>
</feature>
<feature type="transmembrane region" description="Helical" evidence="1">
    <location>
        <begin position="269"/>
        <end position="289"/>
    </location>
</feature>
<feature type="transmembrane region" description="Helical" evidence="1">
    <location>
        <begin position="313"/>
        <end position="333"/>
    </location>
</feature>
<feature type="transmembrane region" description="Helical" evidence="1">
    <location>
        <begin position="352"/>
        <end position="372"/>
    </location>
</feature>